<feature type="chain" id="PRO_1000143267" description="Small ribosomal subunit protein uS17">
    <location>
        <begin position="1"/>
        <end position="87"/>
    </location>
</feature>
<sequence>MAERNSRKVYQGRVVSDKMDKTITVEVSTVKMHPVYGKRMKYSKKYYVHDEDNTAKTGDIVRIAETRPLSRNKRFRLLNIVEKAVII</sequence>
<keyword id="KW-0687">Ribonucleoprotein</keyword>
<keyword id="KW-0689">Ribosomal protein</keyword>
<keyword id="KW-0694">RNA-binding</keyword>
<keyword id="KW-0699">rRNA-binding</keyword>
<gene>
    <name evidence="1" type="primary">rpsQ</name>
    <name type="ordered locus">LCABL_26610</name>
</gene>
<organism>
    <name type="scientific">Lacticaseibacillus casei (strain BL23)</name>
    <name type="common">Lactobacillus casei</name>
    <dbReference type="NCBI Taxonomy" id="543734"/>
    <lineage>
        <taxon>Bacteria</taxon>
        <taxon>Bacillati</taxon>
        <taxon>Bacillota</taxon>
        <taxon>Bacilli</taxon>
        <taxon>Lactobacillales</taxon>
        <taxon>Lactobacillaceae</taxon>
        <taxon>Lacticaseibacillus</taxon>
    </lineage>
</organism>
<protein>
    <recommendedName>
        <fullName evidence="1">Small ribosomal subunit protein uS17</fullName>
    </recommendedName>
    <alternativeName>
        <fullName evidence="2">30S ribosomal protein S17</fullName>
    </alternativeName>
</protein>
<reference key="1">
    <citation type="submission" date="2008-06" db="EMBL/GenBank/DDBJ databases">
        <title>Lactobacillus casei BL23 complete genome sequence.</title>
        <authorList>
            <person name="Maze A."/>
            <person name="Boel G."/>
            <person name="Bourand A."/>
            <person name="Loux V."/>
            <person name="Gibrat J.F."/>
            <person name="Zuniga M."/>
            <person name="Hartke A."/>
            <person name="Deutscher J."/>
        </authorList>
    </citation>
    <scope>NUCLEOTIDE SEQUENCE [LARGE SCALE GENOMIC DNA]</scope>
    <source>
        <strain>BL23</strain>
    </source>
</reference>
<evidence type="ECO:0000255" key="1">
    <source>
        <dbReference type="HAMAP-Rule" id="MF_01345"/>
    </source>
</evidence>
<evidence type="ECO:0000305" key="2"/>
<proteinExistence type="inferred from homology"/>
<name>RS17_LACCB</name>
<accession>B3WAK8</accession>
<dbReference type="EMBL" id="FM177140">
    <property type="protein sequence ID" value="CAQ67727.1"/>
    <property type="molecule type" value="Genomic_DNA"/>
</dbReference>
<dbReference type="SMR" id="B3WAK8"/>
<dbReference type="KEGG" id="lcb:LCABL_26610"/>
<dbReference type="HOGENOM" id="CLU_073626_1_0_9"/>
<dbReference type="GO" id="GO:0022627">
    <property type="term" value="C:cytosolic small ribosomal subunit"/>
    <property type="evidence" value="ECO:0007669"/>
    <property type="project" value="TreeGrafter"/>
</dbReference>
<dbReference type="GO" id="GO:0019843">
    <property type="term" value="F:rRNA binding"/>
    <property type="evidence" value="ECO:0007669"/>
    <property type="project" value="UniProtKB-UniRule"/>
</dbReference>
<dbReference type="GO" id="GO:0003735">
    <property type="term" value="F:structural constituent of ribosome"/>
    <property type="evidence" value="ECO:0007669"/>
    <property type="project" value="InterPro"/>
</dbReference>
<dbReference type="GO" id="GO:0006412">
    <property type="term" value="P:translation"/>
    <property type="evidence" value="ECO:0007669"/>
    <property type="project" value="UniProtKB-UniRule"/>
</dbReference>
<dbReference type="CDD" id="cd00364">
    <property type="entry name" value="Ribosomal_uS17"/>
    <property type="match status" value="1"/>
</dbReference>
<dbReference type="Gene3D" id="2.40.50.140">
    <property type="entry name" value="Nucleic acid-binding proteins"/>
    <property type="match status" value="1"/>
</dbReference>
<dbReference type="HAMAP" id="MF_01345_B">
    <property type="entry name" value="Ribosomal_uS17_B"/>
    <property type="match status" value="1"/>
</dbReference>
<dbReference type="InterPro" id="IPR012340">
    <property type="entry name" value="NA-bd_OB-fold"/>
</dbReference>
<dbReference type="InterPro" id="IPR000266">
    <property type="entry name" value="Ribosomal_uS17"/>
</dbReference>
<dbReference type="InterPro" id="IPR019984">
    <property type="entry name" value="Ribosomal_uS17_bact/chlr"/>
</dbReference>
<dbReference type="InterPro" id="IPR019979">
    <property type="entry name" value="Ribosomal_uS17_CS"/>
</dbReference>
<dbReference type="NCBIfam" id="NF004123">
    <property type="entry name" value="PRK05610.1"/>
    <property type="match status" value="1"/>
</dbReference>
<dbReference type="NCBIfam" id="TIGR03635">
    <property type="entry name" value="uS17_bact"/>
    <property type="match status" value="1"/>
</dbReference>
<dbReference type="PANTHER" id="PTHR10744">
    <property type="entry name" value="40S RIBOSOMAL PROTEIN S11 FAMILY MEMBER"/>
    <property type="match status" value="1"/>
</dbReference>
<dbReference type="PANTHER" id="PTHR10744:SF1">
    <property type="entry name" value="SMALL RIBOSOMAL SUBUNIT PROTEIN US17M"/>
    <property type="match status" value="1"/>
</dbReference>
<dbReference type="Pfam" id="PF00366">
    <property type="entry name" value="Ribosomal_S17"/>
    <property type="match status" value="1"/>
</dbReference>
<dbReference type="PRINTS" id="PR00973">
    <property type="entry name" value="RIBOSOMALS17"/>
</dbReference>
<dbReference type="SUPFAM" id="SSF50249">
    <property type="entry name" value="Nucleic acid-binding proteins"/>
    <property type="match status" value="1"/>
</dbReference>
<dbReference type="PROSITE" id="PS00056">
    <property type="entry name" value="RIBOSOMAL_S17"/>
    <property type="match status" value="1"/>
</dbReference>
<comment type="function">
    <text evidence="1">One of the primary rRNA binding proteins, it binds specifically to the 5'-end of 16S ribosomal RNA.</text>
</comment>
<comment type="subunit">
    <text evidence="1">Part of the 30S ribosomal subunit.</text>
</comment>
<comment type="similarity">
    <text evidence="1">Belongs to the universal ribosomal protein uS17 family.</text>
</comment>